<protein>
    <recommendedName>
        <fullName>Vacuolar protein sorting-associated protein 74</fullName>
    </recommendedName>
</protein>
<keyword id="KW-0333">Golgi apparatus</keyword>
<keyword id="KW-0446">Lipid-binding</keyword>
<keyword id="KW-0472">Membrane</keyword>
<keyword id="KW-0653">Protein transport</keyword>
<keyword id="KW-1185">Reference proteome</keyword>
<keyword id="KW-0813">Transport</keyword>
<reference key="1">
    <citation type="journal article" date="2004" name="Science">
        <title>The Ashbya gossypii genome as a tool for mapping the ancient Saccharomyces cerevisiae genome.</title>
        <authorList>
            <person name="Dietrich F.S."/>
            <person name="Voegeli S."/>
            <person name="Brachat S."/>
            <person name="Lerch A."/>
            <person name="Gates K."/>
            <person name="Steiner S."/>
            <person name="Mohr C."/>
            <person name="Poehlmann R."/>
            <person name="Luedi P."/>
            <person name="Choi S."/>
            <person name="Wing R.A."/>
            <person name="Flavier A."/>
            <person name="Gaffney T.D."/>
            <person name="Philippsen P."/>
        </authorList>
    </citation>
    <scope>NUCLEOTIDE SEQUENCE [LARGE SCALE GENOMIC DNA]</scope>
    <source>
        <strain>ATCC 10895 / CBS 109.51 / FGSC 9923 / NRRL Y-1056</strain>
    </source>
</reference>
<reference key="2">
    <citation type="journal article" date="2013" name="G3 (Bethesda)">
        <title>Genomes of Ashbya fungi isolated from insects reveal four mating-type loci, numerous translocations, lack of transposons, and distinct gene duplications.</title>
        <authorList>
            <person name="Dietrich F.S."/>
            <person name="Voegeli S."/>
            <person name="Kuo S."/>
            <person name="Philippsen P."/>
        </authorList>
    </citation>
    <scope>GENOME REANNOTATION</scope>
    <source>
        <strain>ATCC 10895 / CBS 109.51 / FGSC 9923 / NRRL Y-1056</strain>
    </source>
</reference>
<evidence type="ECO:0000250" key="1"/>
<evidence type="ECO:0000256" key="2">
    <source>
        <dbReference type="SAM" id="MobiDB-lite"/>
    </source>
</evidence>
<evidence type="ECO:0000305" key="3"/>
<accession>P62583</accession>
<accession>Q75CT4</accession>
<gene>
    <name type="primary">VPS74</name>
    <name type="ordered locus">ACL165C</name>
</gene>
<name>VPS74_EREGS</name>
<organism>
    <name type="scientific">Eremothecium gossypii (strain ATCC 10895 / CBS 109.51 / FGSC 9923 / NRRL Y-1056)</name>
    <name type="common">Yeast</name>
    <name type="synonym">Ashbya gossypii</name>
    <dbReference type="NCBI Taxonomy" id="284811"/>
    <lineage>
        <taxon>Eukaryota</taxon>
        <taxon>Fungi</taxon>
        <taxon>Dikarya</taxon>
        <taxon>Ascomycota</taxon>
        <taxon>Saccharomycotina</taxon>
        <taxon>Saccharomycetes</taxon>
        <taxon>Saccharomycetales</taxon>
        <taxon>Saccharomycetaceae</taxon>
        <taxon>Eremothecium</taxon>
    </lineage>
</organism>
<feature type="chain" id="PRO_0000123822" description="Vacuolar protein sorting-associated protein 74">
    <location>
        <begin position="1"/>
        <end position="331"/>
    </location>
</feature>
<feature type="region of interest" description="Disordered" evidence="2">
    <location>
        <begin position="1"/>
        <end position="42"/>
    </location>
</feature>
<feature type="region of interest" description="Beta-hairpin required for oligomerization" evidence="1">
    <location>
        <begin position="183"/>
        <end position="194"/>
    </location>
</feature>
<feature type="compositionally biased region" description="Basic and acidic residues" evidence="2">
    <location>
        <begin position="30"/>
        <end position="42"/>
    </location>
</feature>
<feature type="binding site" evidence="1">
    <location>
        <position position="83"/>
    </location>
    <ligand>
        <name>a 1,2-diacyl-sn-glycero-3-phospho-(1D-myo-inositol 4-phosphate)</name>
        <dbReference type="ChEBI" id="CHEBI:58178"/>
    </ligand>
</feature>
<feature type="binding site" evidence="1">
    <location>
        <position position="164"/>
    </location>
    <ligand>
        <name>a 1,2-diacyl-sn-glycero-3-phospho-(1D-myo-inositol 4-phosphate)</name>
        <dbReference type="ChEBI" id="CHEBI:58178"/>
    </ligand>
</feature>
<feature type="binding site" evidence="1">
    <location>
        <position position="167"/>
    </location>
    <ligand>
        <name>a 1,2-diacyl-sn-glycero-3-phospho-(1D-myo-inositol 4-phosphate)</name>
        <dbReference type="ChEBI" id="CHEBI:58178"/>
    </ligand>
</feature>
<sequence>MSLQRRRVNKTAGNETVGGASLNRSDEEEGMTHKVAYDPEEQKLRENTREPTLTLMEEVLLMGLKDKEGYLSFLNENISYALRGCILIELALRGRIQVVDDAMRRRFDPSERLIEVVDGSKTGEALLDEALTLMKGSEPLTIVNWMDLLSGETWNFLKINYQLRQVRERLAKGLVDKGVLRTEMKNFFLFDMPTHPVADTSCKESIKRRILSVLVPRNVELQYTELFPETVAFKYLRTIALICSAHGANVLEKVLSTLDYEKRDRGFSRAEELLVQFSQYPFALDKDIETGISVNLNRLVQEELDRNPGTALNLEVVAGVLKVYSRMDDLL</sequence>
<dbReference type="EMBL" id="AE016816">
    <property type="protein sequence ID" value="AAS51063.1"/>
    <property type="molecule type" value="Genomic_DNA"/>
</dbReference>
<dbReference type="RefSeq" id="NP_983239.1">
    <property type="nucleotide sequence ID" value="NM_208592.1"/>
</dbReference>
<dbReference type="SMR" id="P62583"/>
<dbReference type="FunCoup" id="P62583">
    <property type="interactions" value="578"/>
</dbReference>
<dbReference type="STRING" id="284811.P62583"/>
<dbReference type="EnsemblFungi" id="AAS51063">
    <property type="protein sequence ID" value="AAS51063"/>
    <property type="gene ID" value="AGOS_ACL165C"/>
</dbReference>
<dbReference type="GeneID" id="4619359"/>
<dbReference type="KEGG" id="ago:AGOS_ACL165C"/>
<dbReference type="eggNOG" id="KOG3983">
    <property type="taxonomic scope" value="Eukaryota"/>
</dbReference>
<dbReference type="HOGENOM" id="CLU_036311_1_1_1"/>
<dbReference type="InParanoid" id="P62583"/>
<dbReference type="OMA" id="GETWNLL"/>
<dbReference type="OrthoDB" id="2189106at2759"/>
<dbReference type="Proteomes" id="UP000000591">
    <property type="component" value="Chromosome III"/>
</dbReference>
<dbReference type="GO" id="GO:0005829">
    <property type="term" value="C:cytosol"/>
    <property type="evidence" value="ECO:0000318"/>
    <property type="project" value="GO_Central"/>
</dbReference>
<dbReference type="GO" id="GO:0031985">
    <property type="term" value="C:Golgi cisterna"/>
    <property type="evidence" value="ECO:0000318"/>
    <property type="project" value="GO_Central"/>
</dbReference>
<dbReference type="GO" id="GO:0032580">
    <property type="term" value="C:Golgi cisterna membrane"/>
    <property type="evidence" value="ECO:0007669"/>
    <property type="project" value="UniProtKB-SubCell"/>
</dbReference>
<dbReference type="GO" id="GO:0005797">
    <property type="term" value="C:Golgi medial cisterna"/>
    <property type="evidence" value="ECO:0007669"/>
    <property type="project" value="EnsemblFungi"/>
</dbReference>
<dbReference type="GO" id="GO:0000139">
    <property type="term" value="C:Golgi membrane"/>
    <property type="evidence" value="ECO:0007669"/>
    <property type="project" value="GOC"/>
</dbReference>
<dbReference type="GO" id="GO:0005802">
    <property type="term" value="C:trans-Golgi network"/>
    <property type="evidence" value="ECO:0000318"/>
    <property type="project" value="GO_Central"/>
</dbReference>
<dbReference type="GO" id="GO:0019899">
    <property type="term" value="F:enzyme binding"/>
    <property type="evidence" value="ECO:0007669"/>
    <property type="project" value="EnsemblFungi"/>
</dbReference>
<dbReference type="GO" id="GO:0070273">
    <property type="term" value="F:phosphatidylinositol-4-phosphate binding"/>
    <property type="evidence" value="ECO:0000318"/>
    <property type="project" value="GO_Central"/>
</dbReference>
<dbReference type="GO" id="GO:0030968">
    <property type="term" value="P:endoplasmic reticulum unfolded protein response"/>
    <property type="evidence" value="ECO:0007669"/>
    <property type="project" value="EnsemblFungi"/>
</dbReference>
<dbReference type="GO" id="GO:0007030">
    <property type="term" value="P:Golgi organization"/>
    <property type="evidence" value="ECO:0000318"/>
    <property type="project" value="GO_Central"/>
</dbReference>
<dbReference type="GO" id="GO:0043001">
    <property type="term" value="P:Golgi to plasma membrane protein transport"/>
    <property type="evidence" value="ECO:0000318"/>
    <property type="project" value="GO_Central"/>
</dbReference>
<dbReference type="GO" id="GO:0048194">
    <property type="term" value="P:Golgi vesicle budding"/>
    <property type="evidence" value="ECO:0000318"/>
    <property type="project" value="GO_Central"/>
</dbReference>
<dbReference type="GO" id="GO:0006487">
    <property type="term" value="P:protein N-linked glycosylation"/>
    <property type="evidence" value="ECO:0007669"/>
    <property type="project" value="EnsemblFungi"/>
</dbReference>
<dbReference type="GO" id="GO:0035269">
    <property type="term" value="P:protein O-linked mannosylation"/>
    <property type="evidence" value="ECO:0007669"/>
    <property type="project" value="EnsemblFungi"/>
</dbReference>
<dbReference type="GO" id="GO:0045053">
    <property type="term" value="P:protein retention in Golgi apparatus"/>
    <property type="evidence" value="ECO:0007669"/>
    <property type="project" value="EnsemblFungi"/>
</dbReference>
<dbReference type="GO" id="GO:0060304">
    <property type="term" value="P:regulation of phosphatidylinositol dephosphorylation"/>
    <property type="evidence" value="ECO:0007669"/>
    <property type="project" value="EnsemblFungi"/>
</dbReference>
<dbReference type="GO" id="GO:0006890">
    <property type="term" value="P:retrograde vesicle-mediated transport, Golgi to endoplasmic reticulum"/>
    <property type="evidence" value="ECO:0000318"/>
    <property type="project" value="GO_Central"/>
</dbReference>
<dbReference type="FunFam" id="1.10.3630.10:FF:000002">
    <property type="entry name" value="Vacuolar sorting-associated 74 protein"/>
    <property type="match status" value="1"/>
</dbReference>
<dbReference type="Gene3D" id="1.10.3630.10">
    <property type="entry name" value="yeast vps74-n-term truncation variant domain like"/>
    <property type="match status" value="1"/>
</dbReference>
<dbReference type="InterPro" id="IPR008628">
    <property type="entry name" value="GPP34-like"/>
</dbReference>
<dbReference type="InterPro" id="IPR038261">
    <property type="entry name" value="GPP34-like_sf"/>
</dbReference>
<dbReference type="PANTHER" id="PTHR12704:SF2">
    <property type="entry name" value="GOLGI PHOSPHOPROTEIN 3 HOMOLOG SAURON"/>
    <property type="match status" value="1"/>
</dbReference>
<dbReference type="PANTHER" id="PTHR12704">
    <property type="entry name" value="TRANS-GOLGI PROTEIN GMX33"/>
    <property type="match status" value="1"/>
</dbReference>
<dbReference type="Pfam" id="PF05719">
    <property type="entry name" value="GPP34"/>
    <property type="match status" value="1"/>
</dbReference>
<comment type="function">
    <text evidence="1">Phosphatidylinositol-4-phosphate-binding protein that links Golgi membranes to the cytoskeleton and may participate in the tensile force required for vesicle budding from the Golgi. Thereby, may play a role in Golgi membrane trafficking and could indirectly give its flattened shape to the Golgi apparatus. May also bind to the coatomer to regulate Golgi membrane trafficking. May play a role in anterograde transport from the Golgi to the plasma membrane and regulate secretion. Mediates the cis and medial Golgi localization of mannosyltransferases through direct binding of their cytosolic domains. Involved in vacuolar protein sorting (By similarity).</text>
</comment>
<comment type="subunit">
    <text evidence="1">Homotetramer.</text>
</comment>
<comment type="subcellular location">
    <subcellularLocation>
        <location evidence="1">Golgi apparatus</location>
        <location evidence="1">Golgi stack membrane</location>
        <topology evidence="1">Peripheral membrane protein</topology>
        <orientation evidence="1">Cytoplasmic side</orientation>
    </subcellularLocation>
    <text evidence="1">Phosphatidylinositol 4-phosphate-binding and oligomerization participate in the recruitment onto Golgi membranes.</text>
</comment>
<comment type="similarity">
    <text evidence="3">Belongs to the GOLPH3/VPS74 family.</text>
</comment>
<proteinExistence type="inferred from homology"/>